<comment type="function">
    <text evidence="6">Has calcium-dependent phospholipase and lysophospholipase activities with a potential role in membrane lipid remodeling and biosynthesis of lipid mediators (PubMed:29158256). Preferentially hydrolyzes the ester bond of the fatty acyl group attached at sn-2 position of phospholipids (phospholipase A2 activity) (PubMed:29158256). Selectively hydrolyzes sn-2 arachidonoyl group from membrane phospholipids, providing the precursor for eicosanoid biosynthesis (PubMed:29158256). In myocardial mitochondria, plays a major role in arachidonate release that is metabolically channeled to the formation of cardioprotective eicosanoids, epoxyeicosatrienoates (EETs) (PubMed:29158256).</text>
</comment>
<comment type="catalytic activity">
    <reaction evidence="6">
        <text>a 1,2-diacyl-sn-glycero-3-phosphocholine + H2O = a 1-acyl-sn-glycero-3-phosphocholine + a fatty acid + H(+)</text>
        <dbReference type="Rhea" id="RHEA:15801"/>
        <dbReference type="ChEBI" id="CHEBI:15377"/>
        <dbReference type="ChEBI" id="CHEBI:15378"/>
        <dbReference type="ChEBI" id="CHEBI:28868"/>
        <dbReference type="ChEBI" id="CHEBI:57643"/>
        <dbReference type="ChEBI" id="CHEBI:58168"/>
        <dbReference type="EC" id="3.1.1.4"/>
    </reaction>
    <physiologicalReaction direction="left-to-right" evidence="10">
        <dbReference type="Rhea" id="RHEA:15802"/>
    </physiologicalReaction>
</comment>
<comment type="catalytic activity">
    <reaction evidence="2">
        <text>a 1-O-alkyl-2-acyl-sn-glycero-3-phosphocholine + H2O = a 1-O-alkyl-sn-glycero-3-phosphocholine + a fatty acid + H(+)</text>
        <dbReference type="Rhea" id="RHEA:36231"/>
        <dbReference type="ChEBI" id="CHEBI:15377"/>
        <dbReference type="ChEBI" id="CHEBI:15378"/>
        <dbReference type="ChEBI" id="CHEBI:28868"/>
        <dbReference type="ChEBI" id="CHEBI:30909"/>
        <dbReference type="ChEBI" id="CHEBI:36702"/>
        <dbReference type="EC" id="3.1.1.4"/>
    </reaction>
    <physiologicalReaction direction="left-to-right" evidence="2">
        <dbReference type="Rhea" id="RHEA:36232"/>
    </physiologicalReaction>
</comment>
<comment type="catalytic activity">
    <reaction evidence="2">
        <text>1-hexadecanoyl-2-(9Z-octadecenoyl)-sn-glycero-3-phosphocholine + H2O = 2-(9Z-octadecenoyl)-sn-glycero-3-phosphocholine + hexadecanoate + H(+)</text>
        <dbReference type="Rhea" id="RHEA:38783"/>
        <dbReference type="ChEBI" id="CHEBI:7896"/>
        <dbReference type="ChEBI" id="CHEBI:15377"/>
        <dbReference type="ChEBI" id="CHEBI:15378"/>
        <dbReference type="ChEBI" id="CHEBI:73001"/>
        <dbReference type="ChEBI" id="CHEBI:76071"/>
    </reaction>
    <physiologicalReaction direction="left-to-right" evidence="2">
        <dbReference type="Rhea" id="RHEA:38784"/>
    </physiologicalReaction>
</comment>
<comment type="catalytic activity">
    <reaction evidence="2">
        <text>1-hexadecanoyl-2-(9Z,12Z-octadecadienoyl)-sn-glycero-3-phosphocholine + H2O = (9Z,12Z)-octadecadienoate + 1-hexadecanoyl-sn-glycero-3-phosphocholine + H(+)</text>
        <dbReference type="Rhea" id="RHEA:40811"/>
        <dbReference type="ChEBI" id="CHEBI:15377"/>
        <dbReference type="ChEBI" id="CHEBI:15378"/>
        <dbReference type="ChEBI" id="CHEBI:30245"/>
        <dbReference type="ChEBI" id="CHEBI:72998"/>
        <dbReference type="ChEBI" id="CHEBI:73002"/>
    </reaction>
    <physiologicalReaction direction="left-to-right" evidence="2">
        <dbReference type="Rhea" id="RHEA:40812"/>
    </physiologicalReaction>
</comment>
<comment type="catalytic activity">
    <reaction evidence="6">
        <text>1-hexadecanoyl-2-(5Z,8Z,11Z,14Z-eicosatetraenoyl)-sn-glycero-3-phosphocholine + H2O = 1-hexadecanoyl-sn-glycero-3-phosphocholine + (5Z,8Z,11Z,14Z)-eicosatetraenoate + H(+)</text>
        <dbReference type="Rhea" id="RHEA:40427"/>
        <dbReference type="ChEBI" id="CHEBI:15377"/>
        <dbReference type="ChEBI" id="CHEBI:15378"/>
        <dbReference type="ChEBI" id="CHEBI:32395"/>
        <dbReference type="ChEBI" id="CHEBI:72998"/>
        <dbReference type="ChEBI" id="CHEBI:73003"/>
    </reaction>
    <physiologicalReaction direction="left-to-right" evidence="10">
        <dbReference type="Rhea" id="RHEA:40428"/>
    </physiologicalReaction>
</comment>
<comment type="catalytic activity">
    <reaction evidence="2">
        <text>1-hexadecanoyl-2-(9Z,12Z-octadecadienoyl)-sn-glycero-3-phosphoethanolamine + H2O = 1-hexadecanoyl-sn-glycero-3-phosphoethanolamine + (9Z,12Z)-octadecadienoate + H(+)</text>
        <dbReference type="Rhea" id="RHEA:40815"/>
        <dbReference type="ChEBI" id="CHEBI:15377"/>
        <dbReference type="ChEBI" id="CHEBI:15378"/>
        <dbReference type="ChEBI" id="CHEBI:30245"/>
        <dbReference type="ChEBI" id="CHEBI:73004"/>
        <dbReference type="ChEBI" id="CHEBI:73008"/>
    </reaction>
    <physiologicalReaction direction="left-to-right" evidence="2">
        <dbReference type="Rhea" id="RHEA:40816"/>
    </physiologicalReaction>
</comment>
<comment type="catalytic activity">
    <reaction evidence="2">
        <text>1-hexadecanoyl-2-(5Z,8Z,11Z,14Z-eicosatetraenoyl)-sn-glycero-3-phosphoethanolamine + H2O = 1-hexadecanoyl-sn-glycero-3-phosphoethanolamine + (5Z,8Z,11Z,14Z)-eicosatetraenoate + H(+)</text>
        <dbReference type="Rhea" id="RHEA:40431"/>
        <dbReference type="ChEBI" id="CHEBI:15377"/>
        <dbReference type="ChEBI" id="CHEBI:15378"/>
        <dbReference type="ChEBI" id="CHEBI:32395"/>
        <dbReference type="ChEBI" id="CHEBI:73004"/>
        <dbReference type="ChEBI" id="CHEBI:73009"/>
    </reaction>
    <physiologicalReaction direction="left-to-right" evidence="2">
        <dbReference type="Rhea" id="RHEA:40432"/>
    </physiologicalReaction>
</comment>
<comment type="catalytic activity">
    <reaction evidence="2">
        <text>1-(5Z,8Z,11Z,14Z-eicosatetraenoyl)-2-O-hexadecyl-sn-glycero-3-phosphocholine + H2O = 2-O-hexadecyl-sn-glycero-3-phosphocholine + (5Z,8Z,11Z,14Z)-eicosatetraenoate + H(+)</text>
        <dbReference type="Rhea" id="RHEA:41271"/>
        <dbReference type="ChEBI" id="CHEBI:15377"/>
        <dbReference type="ChEBI" id="CHEBI:15378"/>
        <dbReference type="ChEBI" id="CHEBI:32395"/>
        <dbReference type="ChEBI" id="CHEBI:77695"/>
        <dbReference type="ChEBI" id="CHEBI:77696"/>
    </reaction>
    <physiologicalReaction direction="left-to-right" evidence="2">
        <dbReference type="Rhea" id="RHEA:41272"/>
    </physiologicalReaction>
</comment>
<comment type="catalytic activity">
    <reaction evidence="2">
        <text>1-O-hexadecyl-2-(5Z,8Z,11Z,14Z)-eicosatetraenoyl-sn-glycero-3-phosphocholine + H2O = 1-O-hexadecyl-sn-glycero-3-phosphocholine + (5Z,8Z,11Z,14Z)-eicosatetraenoate + H(+)</text>
        <dbReference type="Rhea" id="RHEA:41067"/>
        <dbReference type="ChEBI" id="CHEBI:15377"/>
        <dbReference type="ChEBI" id="CHEBI:15378"/>
        <dbReference type="ChEBI" id="CHEBI:32395"/>
        <dbReference type="ChEBI" id="CHEBI:55430"/>
        <dbReference type="ChEBI" id="CHEBI:64496"/>
    </reaction>
    <physiologicalReaction direction="left-to-right" evidence="2">
        <dbReference type="Rhea" id="RHEA:41068"/>
    </physiologicalReaction>
</comment>
<comment type="catalytic activity">
    <reaction evidence="2">
        <text>1-hexadecanoyl-sn-glycero-3-phosphocholine + H2O = sn-glycerol 3-phosphocholine + hexadecanoate + H(+)</text>
        <dbReference type="Rhea" id="RHEA:40435"/>
        <dbReference type="ChEBI" id="CHEBI:7896"/>
        <dbReference type="ChEBI" id="CHEBI:15377"/>
        <dbReference type="ChEBI" id="CHEBI:15378"/>
        <dbReference type="ChEBI" id="CHEBI:16870"/>
        <dbReference type="ChEBI" id="CHEBI:72998"/>
    </reaction>
    <physiologicalReaction direction="left-to-right" evidence="2">
        <dbReference type="Rhea" id="RHEA:40436"/>
    </physiologicalReaction>
</comment>
<comment type="cofactor">
    <cofactor evidence="2 3">
        <name>Ca(2+)</name>
        <dbReference type="ChEBI" id="CHEBI:29108"/>
    </cofactor>
</comment>
<comment type="activity regulation">
    <text evidence="2">Stimulated by cytosolic Ca(2+).</text>
</comment>
<comment type="subcellular location">
    <subcellularLocation>
        <location evidence="2">Cytoplasm</location>
        <location evidence="2">Cytosol</location>
    </subcellularLocation>
    <subcellularLocation>
        <location evidence="2">Cell membrane</location>
        <topology evidence="9">Peripheral membrane protein</topology>
    </subcellularLocation>
    <subcellularLocation>
        <location evidence="6">Mitochondrion</location>
    </subcellularLocation>
</comment>
<comment type="alternative products">
    <event type="alternative splicing"/>
    <isoform>
        <id>Q68DD2-1</id>
        <name>1</name>
        <sequence type="displayed"/>
    </isoform>
    <isoform>
        <id>Q68DD2-2</id>
        <name>2</name>
        <sequence type="described" ref="VSP_019888 VSP_019889"/>
    </isoform>
    <isoform>
        <id>Q68DD2-3</id>
        <name>3</name>
        <sequence type="described" ref="VSP_019887"/>
    </isoform>
</comment>
<comment type="tissue specificity">
    <text evidence="6">Expressed in myocardium (at protein level).</text>
</comment>
<comment type="domain">
    <text evidence="1">The N-terminal C2 domain associates with lipid membranes upon calcium binding. It modulates enzyme activity by presenting the active site to its substrate in response to elevations of cytosolic Ca(2+) (By similarity).</text>
</comment>
<evidence type="ECO:0000250" key="1"/>
<evidence type="ECO:0000250" key="2">
    <source>
        <dbReference type="UniProtKB" id="Q50L41"/>
    </source>
</evidence>
<evidence type="ECO:0000255" key="3">
    <source>
        <dbReference type="PROSITE-ProRule" id="PRU00041"/>
    </source>
</evidence>
<evidence type="ECO:0000255" key="4">
    <source>
        <dbReference type="PROSITE-ProRule" id="PRU00555"/>
    </source>
</evidence>
<evidence type="ECO:0000269" key="5">
    <source>
    </source>
</evidence>
<evidence type="ECO:0000269" key="6">
    <source>
    </source>
</evidence>
<evidence type="ECO:0000303" key="7">
    <source>
    </source>
</evidence>
<evidence type="ECO:0000303" key="8">
    <source>
    </source>
</evidence>
<evidence type="ECO:0000305" key="9"/>
<evidence type="ECO:0000305" key="10">
    <source>
    </source>
</evidence>
<name>PA24F_HUMAN</name>
<sequence length="849" mass="95082">MLWALWPRWLADKMLPLLGAVLLQKREKRGPLWRHWRRETYPYYDLQVKVLRATNIRGTDLLSKADCYVQLWLPTASPSPAQTRIVANCSDPEWNETFHYQIHGAVKNVLELTLYDKDILGSDQLSLLLFDLRSLKCGQPHKHTFPLNHQDSQELQVEFVLEKSQVPASEVITNGVLVAHPCLRIQGTLRGDGTAPREEYGSRQLQLAVPGAYEKPQLLPLQPPTEPGLPPTFTFHVNPVLSSRLHVELMELLAAVQSGPSAELEAQTSKLGEGGILLSSLPLGQEEQCSVALGEGQEVALSMKVEMSSGDLDLRLGFDLSDGEQEFLDRRKQVVSKALQQVLGLSEALDSGQVPVVAVLGSGGGTRAMSSLYGSLAGLQELGLLDTVTYLSGVSGSTWCISTLYRDPAWSQVALQGPIERAQVHVCSSKMGALSTERLQYYTQELGVRERSGHSVSLIDLWGLLVEYLLYQEENPAKLSDQQEAVRQGQNPYPIYTSVNVRTNLSGEDFAEWCEFTPYEVGFPKYGAYVPTELFGSELFMGRLLQLQPEPRICYLQGMWGSAFATSLDEIFLKTAGSGLSFLEWYRGSVNITDDCQKPQLHNPSRLRTRLLTPQGPFSQAVLDIFTSRFTSAQSFNFTRGLCLHKDYVAGREFVAWKDTHPDAFPNQLTPMRDCLYLVDGGFAINSPFPLALLPQRAVDLILSFDYSLEAPFEVLKMTEKYCLDRGIPFPSIEVGPEDMEEARECYLFAKAEDPRSPIVLHFPLVNRTFRTHLAPGVERQTAEEKAFGDFVINRPDTPYGMMNFTYEPQDFYRLVALSRYNVLNNVETLKCALQLALDRHQARERAGA</sequence>
<accession>Q68DD2</accession>
<accession>Q6ZMC8</accession>
<protein>
    <recommendedName>
        <fullName>Cytosolic phospholipase A2 zeta</fullName>
        <shortName>cPLA2-zeta</shortName>
        <ecNumber evidence="6">3.1.1.4</ecNumber>
    </recommendedName>
    <alternativeName>
        <fullName>Phospholipase A2 group IVF</fullName>
    </alternativeName>
</protein>
<proteinExistence type="evidence at protein level"/>
<keyword id="KW-0025">Alternative splicing</keyword>
<keyword id="KW-0106">Calcium</keyword>
<keyword id="KW-1003">Cell membrane</keyword>
<keyword id="KW-0963">Cytoplasm</keyword>
<keyword id="KW-0903">Direct protein sequencing</keyword>
<keyword id="KW-0378">Hydrolase</keyword>
<keyword id="KW-0442">Lipid degradation</keyword>
<keyword id="KW-0443">Lipid metabolism</keyword>
<keyword id="KW-0472">Membrane</keyword>
<keyword id="KW-0479">Metal-binding</keyword>
<keyword id="KW-0496">Mitochondrion</keyword>
<keyword id="KW-0595">Phospholipid degradation</keyword>
<keyword id="KW-1208">Phospholipid metabolism</keyword>
<keyword id="KW-1267">Proteomics identification</keyword>
<keyword id="KW-1185">Reference proteome</keyword>
<dbReference type="EC" id="3.1.1.4" evidence="6"/>
<dbReference type="EMBL" id="AK172836">
    <property type="protein sequence ID" value="BAD18801.1"/>
    <property type="molecule type" value="mRNA"/>
</dbReference>
<dbReference type="EMBL" id="AC036103">
    <property type="status" value="NOT_ANNOTATED_CDS"/>
    <property type="molecule type" value="Genomic_DNA"/>
</dbReference>
<dbReference type="EMBL" id="CR749451">
    <property type="protein sequence ID" value="CAH18288.1"/>
    <property type="molecule type" value="mRNA"/>
</dbReference>
<dbReference type="CCDS" id="CCDS32204.1">
    <molecule id="Q68DD2-1"/>
</dbReference>
<dbReference type="RefSeq" id="NP_998765.3">
    <molecule id="Q68DD2-1"/>
    <property type="nucleotide sequence ID" value="NM_213600.4"/>
</dbReference>
<dbReference type="SMR" id="Q68DD2"/>
<dbReference type="BioGRID" id="129083">
    <property type="interactions" value="10"/>
</dbReference>
<dbReference type="FunCoup" id="Q68DD2">
    <property type="interactions" value="928"/>
</dbReference>
<dbReference type="IntAct" id="Q68DD2">
    <property type="interactions" value="9"/>
</dbReference>
<dbReference type="STRING" id="9606.ENSP00000380442"/>
<dbReference type="iPTMnet" id="Q68DD2"/>
<dbReference type="PhosphoSitePlus" id="Q68DD2"/>
<dbReference type="BioMuta" id="PLA2G4F"/>
<dbReference type="DMDM" id="317373489"/>
<dbReference type="jPOST" id="Q68DD2"/>
<dbReference type="MassIVE" id="Q68DD2"/>
<dbReference type="PaxDb" id="9606-ENSP00000380442"/>
<dbReference type="PeptideAtlas" id="Q68DD2"/>
<dbReference type="ProteomicsDB" id="66075">
    <molecule id="Q68DD2-1"/>
</dbReference>
<dbReference type="ProteomicsDB" id="66076">
    <molecule id="Q68DD2-2"/>
</dbReference>
<dbReference type="ProteomicsDB" id="66077">
    <molecule id="Q68DD2-3"/>
</dbReference>
<dbReference type="Antibodypedia" id="42117">
    <property type="antibodies" value="68 antibodies from 24 providers"/>
</dbReference>
<dbReference type="DNASU" id="255189"/>
<dbReference type="Ensembl" id="ENST00000397272.7">
    <molecule id="Q68DD2-1"/>
    <property type="protein sequence ID" value="ENSP00000380442.4"/>
    <property type="gene ID" value="ENSG00000168907.13"/>
</dbReference>
<dbReference type="GeneID" id="255189"/>
<dbReference type="KEGG" id="hsa:255189"/>
<dbReference type="MANE-Select" id="ENST00000397272.7">
    <property type="protein sequence ID" value="ENSP00000380442.4"/>
    <property type="RefSeq nucleotide sequence ID" value="NM_213600.4"/>
    <property type="RefSeq protein sequence ID" value="NP_998765.3"/>
</dbReference>
<dbReference type="UCSC" id="uc001zoz.4">
    <molecule id="Q68DD2-1"/>
    <property type="organism name" value="human"/>
</dbReference>
<dbReference type="AGR" id="HGNC:27396"/>
<dbReference type="CTD" id="255189"/>
<dbReference type="DisGeNET" id="255189"/>
<dbReference type="GeneCards" id="PLA2G4F"/>
<dbReference type="HGNC" id="HGNC:27396">
    <property type="gene designation" value="PLA2G4F"/>
</dbReference>
<dbReference type="HPA" id="ENSG00000168907">
    <property type="expression patterns" value="Tissue enriched (skin)"/>
</dbReference>
<dbReference type="neXtProt" id="NX_Q68DD2"/>
<dbReference type="OpenTargets" id="ENSG00000168907"/>
<dbReference type="PharmGKB" id="PA142671170"/>
<dbReference type="VEuPathDB" id="HostDB:ENSG00000168907"/>
<dbReference type="eggNOG" id="KOG1028">
    <property type="taxonomic scope" value="Eukaryota"/>
</dbReference>
<dbReference type="eggNOG" id="KOG1325">
    <property type="taxonomic scope" value="Eukaryota"/>
</dbReference>
<dbReference type="GeneTree" id="ENSGT01030000234606"/>
<dbReference type="HOGENOM" id="CLU_011663_0_0_1"/>
<dbReference type="InParanoid" id="Q68DD2"/>
<dbReference type="OMA" id="PMRLKTR"/>
<dbReference type="OrthoDB" id="419768at2759"/>
<dbReference type="PAN-GO" id="Q68DD2">
    <property type="GO annotations" value="7 GO annotations based on evolutionary models"/>
</dbReference>
<dbReference type="PhylomeDB" id="Q68DD2"/>
<dbReference type="TreeFam" id="TF325228"/>
<dbReference type="PathwayCommons" id="Q68DD2"/>
<dbReference type="Reactome" id="R-HSA-1482788">
    <property type="pathway name" value="Acyl chain remodelling of PC"/>
</dbReference>
<dbReference type="Reactome" id="R-HSA-1482801">
    <property type="pathway name" value="Acyl chain remodelling of PS"/>
</dbReference>
<dbReference type="Reactome" id="R-HSA-1482839">
    <property type="pathway name" value="Acyl chain remodelling of PE"/>
</dbReference>
<dbReference type="Reactome" id="R-HSA-1482922">
    <property type="pathway name" value="Acyl chain remodelling of PI"/>
</dbReference>
<dbReference type="Reactome" id="R-HSA-1482925">
    <property type="pathway name" value="Acyl chain remodelling of PG"/>
</dbReference>
<dbReference type="Reactome" id="R-HSA-1483115">
    <property type="pathway name" value="Hydrolysis of LPC"/>
</dbReference>
<dbReference type="SignaLink" id="Q68DD2"/>
<dbReference type="BioGRID-ORCS" id="255189">
    <property type="hits" value="7 hits in 1144 CRISPR screens"/>
</dbReference>
<dbReference type="GenomeRNAi" id="255189"/>
<dbReference type="Pharos" id="Q68DD2">
    <property type="development level" value="Tdark"/>
</dbReference>
<dbReference type="PRO" id="PR:Q68DD2"/>
<dbReference type="Proteomes" id="UP000005640">
    <property type="component" value="Chromosome 15"/>
</dbReference>
<dbReference type="RNAct" id="Q68DD2">
    <property type="molecule type" value="protein"/>
</dbReference>
<dbReference type="Bgee" id="ENSG00000168907">
    <property type="expression patterns" value="Expressed in skin of abdomen and 115 other cell types or tissues"/>
</dbReference>
<dbReference type="ExpressionAtlas" id="Q68DD2">
    <property type="expression patterns" value="baseline and differential"/>
</dbReference>
<dbReference type="GO" id="GO:0005829">
    <property type="term" value="C:cytosol"/>
    <property type="evidence" value="ECO:0000318"/>
    <property type="project" value="GO_Central"/>
</dbReference>
<dbReference type="GO" id="GO:0005739">
    <property type="term" value="C:mitochondrion"/>
    <property type="evidence" value="ECO:0007669"/>
    <property type="project" value="UniProtKB-SubCell"/>
</dbReference>
<dbReference type="GO" id="GO:0032587">
    <property type="term" value="C:ruffle membrane"/>
    <property type="evidence" value="ECO:0000318"/>
    <property type="project" value="GO_Central"/>
</dbReference>
<dbReference type="GO" id="GO:0031982">
    <property type="term" value="C:vesicle"/>
    <property type="evidence" value="ECO:0000318"/>
    <property type="project" value="GO_Central"/>
</dbReference>
<dbReference type="GO" id="GO:0005509">
    <property type="term" value="F:calcium ion binding"/>
    <property type="evidence" value="ECO:0000318"/>
    <property type="project" value="GO_Central"/>
</dbReference>
<dbReference type="GO" id="GO:0047498">
    <property type="term" value="F:calcium-dependent phospholipase A2 activity"/>
    <property type="evidence" value="ECO:0000318"/>
    <property type="project" value="GO_Central"/>
</dbReference>
<dbReference type="GO" id="GO:0005544">
    <property type="term" value="F:calcium-dependent phospholipid binding"/>
    <property type="evidence" value="ECO:0000318"/>
    <property type="project" value="GO_Central"/>
</dbReference>
<dbReference type="GO" id="GO:0004622">
    <property type="term" value="F:lysophospholipase activity"/>
    <property type="evidence" value="ECO:0007669"/>
    <property type="project" value="Ensembl"/>
</dbReference>
<dbReference type="GO" id="GO:0008970">
    <property type="term" value="F:phospholipase A1 activity"/>
    <property type="evidence" value="ECO:0000304"/>
    <property type="project" value="Reactome"/>
</dbReference>
<dbReference type="GO" id="GO:0050482">
    <property type="term" value="P:arachidonate secretion"/>
    <property type="evidence" value="ECO:0007669"/>
    <property type="project" value="Ensembl"/>
</dbReference>
<dbReference type="GO" id="GO:0071236">
    <property type="term" value="P:cellular response to antibiotic"/>
    <property type="evidence" value="ECO:0007669"/>
    <property type="project" value="Ensembl"/>
</dbReference>
<dbReference type="GO" id="GO:0046475">
    <property type="term" value="P:glycerophospholipid catabolic process"/>
    <property type="evidence" value="ECO:0000318"/>
    <property type="project" value="GO_Central"/>
</dbReference>
<dbReference type="GO" id="GO:0036148">
    <property type="term" value="P:phosphatidylglycerol acyl-chain remodeling"/>
    <property type="evidence" value="ECO:0000304"/>
    <property type="project" value="Reactome"/>
</dbReference>
<dbReference type="GO" id="GO:0001516">
    <property type="term" value="P:prostaglandin biosynthetic process"/>
    <property type="evidence" value="ECO:0007669"/>
    <property type="project" value="Ensembl"/>
</dbReference>
<dbReference type="CDD" id="cd04036">
    <property type="entry name" value="C2_cPLA2"/>
    <property type="match status" value="1"/>
</dbReference>
<dbReference type="CDD" id="cd07201">
    <property type="entry name" value="cPLA2_Grp-IVB-IVD-IVE-IVF"/>
    <property type="match status" value="1"/>
</dbReference>
<dbReference type="FunFam" id="2.60.40.150:FF:000030">
    <property type="entry name" value="Phospholipase A2"/>
    <property type="match status" value="1"/>
</dbReference>
<dbReference type="FunFam" id="3.40.1090.10:FF:000002">
    <property type="entry name" value="Phospholipase A2"/>
    <property type="match status" value="1"/>
</dbReference>
<dbReference type="Gene3D" id="2.60.40.150">
    <property type="entry name" value="C2 domain"/>
    <property type="match status" value="1"/>
</dbReference>
<dbReference type="Gene3D" id="3.40.1090.10">
    <property type="entry name" value="Cytosolic phospholipase A2 catalytic domain"/>
    <property type="match status" value="1"/>
</dbReference>
<dbReference type="InterPro" id="IPR016035">
    <property type="entry name" value="Acyl_Trfase/lysoPLipase"/>
</dbReference>
<dbReference type="InterPro" id="IPR041847">
    <property type="entry name" value="C2_cPLA2"/>
</dbReference>
<dbReference type="InterPro" id="IPR000008">
    <property type="entry name" value="C2_dom"/>
</dbReference>
<dbReference type="InterPro" id="IPR035892">
    <property type="entry name" value="C2_domain_sf"/>
</dbReference>
<dbReference type="InterPro" id="IPR040723">
    <property type="entry name" value="cPLA2_C2"/>
</dbReference>
<dbReference type="InterPro" id="IPR002642">
    <property type="entry name" value="LysoPLipase_cat_dom"/>
</dbReference>
<dbReference type="PANTHER" id="PTHR10728">
    <property type="entry name" value="CYTOSOLIC PHOSPHOLIPASE A2"/>
    <property type="match status" value="1"/>
</dbReference>
<dbReference type="PANTHER" id="PTHR10728:SF22">
    <property type="entry name" value="CYTOSOLIC PHOSPHOLIPASE A2 ZETA"/>
    <property type="match status" value="1"/>
</dbReference>
<dbReference type="Pfam" id="PF00168">
    <property type="entry name" value="C2"/>
    <property type="match status" value="1"/>
</dbReference>
<dbReference type="Pfam" id="PF18695">
    <property type="entry name" value="cPLA2_C2"/>
    <property type="match status" value="1"/>
</dbReference>
<dbReference type="Pfam" id="PF01735">
    <property type="entry name" value="PLA2_B"/>
    <property type="match status" value="1"/>
</dbReference>
<dbReference type="SMART" id="SM00239">
    <property type="entry name" value="C2"/>
    <property type="match status" value="1"/>
</dbReference>
<dbReference type="SMART" id="SM00022">
    <property type="entry name" value="PLAc"/>
    <property type="match status" value="1"/>
</dbReference>
<dbReference type="SUPFAM" id="SSF49562">
    <property type="entry name" value="C2 domain (Calcium/lipid-binding domain, CaLB)"/>
    <property type="match status" value="1"/>
</dbReference>
<dbReference type="SUPFAM" id="SSF52151">
    <property type="entry name" value="FabD/lysophospholipase-like"/>
    <property type="match status" value="1"/>
</dbReference>
<dbReference type="PROSITE" id="PS50004">
    <property type="entry name" value="C2"/>
    <property type="match status" value="1"/>
</dbReference>
<dbReference type="PROSITE" id="PS51210">
    <property type="entry name" value="PLA2C"/>
    <property type="match status" value="1"/>
</dbReference>
<gene>
    <name type="primary">PLA2G4F</name>
</gene>
<reference key="1">
    <citation type="journal article" date="2004" name="Nat. Genet.">
        <title>Complete sequencing and characterization of 21,243 full-length human cDNAs.</title>
        <authorList>
            <person name="Ota T."/>
            <person name="Suzuki Y."/>
            <person name="Nishikawa T."/>
            <person name="Otsuki T."/>
            <person name="Sugiyama T."/>
            <person name="Irie R."/>
            <person name="Wakamatsu A."/>
            <person name="Hayashi K."/>
            <person name="Sato H."/>
            <person name="Nagai K."/>
            <person name="Kimura K."/>
            <person name="Makita H."/>
            <person name="Sekine M."/>
            <person name="Obayashi M."/>
            <person name="Nishi T."/>
            <person name="Shibahara T."/>
            <person name="Tanaka T."/>
            <person name="Ishii S."/>
            <person name="Yamamoto J."/>
            <person name="Saito K."/>
            <person name="Kawai Y."/>
            <person name="Isono Y."/>
            <person name="Nakamura Y."/>
            <person name="Nagahari K."/>
            <person name="Murakami K."/>
            <person name="Yasuda T."/>
            <person name="Iwayanagi T."/>
            <person name="Wagatsuma M."/>
            <person name="Shiratori A."/>
            <person name="Sudo H."/>
            <person name="Hosoiri T."/>
            <person name="Kaku Y."/>
            <person name="Kodaira H."/>
            <person name="Kondo H."/>
            <person name="Sugawara M."/>
            <person name="Takahashi M."/>
            <person name="Kanda K."/>
            <person name="Yokoi T."/>
            <person name="Furuya T."/>
            <person name="Kikkawa E."/>
            <person name="Omura Y."/>
            <person name="Abe K."/>
            <person name="Kamihara K."/>
            <person name="Katsuta N."/>
            <person name="Sato K."/>
            <person name="Tanikawa M."/>
            <person name="Yamazaki M."/>
            <person name="Ninomiya K."/>
            <person name="Ishibashi T."/>
            <person name="Yamashita H."/>
            <person name="Murakawa K."/>
            <person name="Fujimori K."/>
            <person name="Tanai H."/>
            <person name="Kimata M."/>
            <person name="Watanabe M."/>
            <person name="Hiraoka S."/>
            <person name="Chiba Y."/>
            <person name="Ishida S."/>
            <person name="Ono Y."/>
            <person name="Takiguchi S."/>
            <person name="Watanabe S."/>
            <person name="Yosida M."/>
            <person name="Hotuta T."/>
            <person name="Kusano J."/>
            <person name="Kanehori K."/>
            <person name="Takahashi-Fujii A."/>
            <person name="Hara H."/>
            <person name="Tanase T.-O."/>
            <person name="Nomura Y."/>
            <person name="Togiya S."/>
            <person name="Komai F."/>
            <person name="Hara R."/>
            <person name="Takeuchi K."/>
            <person name="Arita M."/>
            <person name="Imose N."/>
            <person name="Musashino K."/>
            <person name="Yuuki H."/>
            <person name="Oshima A."/>
            <person name="Sasaki N."/>
            <person name="Aotsuka S."/>
            <person name="Yoshikawa Y."/>
            <person name="Matsunawa H."/>
            <person name="Ichihara T."/>
            <person name="Shiohata N."/>
            <person name="Sano S."/>
            <person name="Moriya S."/>
            <person name="Momiyama H."/>
            <person name="Satoh N."/>
            <person name="Takami S."/>
            <person name="Terashima Y."/>
            <person name="Suzuki O."/>
            <person name="Nakagawa S."/>
            <person name="Senoh A."/>
            <person name="Mizoguchi H."/>
            <person name="Goto Y."/>
            <person name="Shimizu F."/>
            <person name="Wakebe H."/>
            <person name="Hishigaki H."/>
            <person name="Watanabe T."/>
            <person name="Sugiyama A."/>
            <person name="Takemoto M."/>
            <person name="Kawakami B."/>
            <person name="Yamazaki M."/>
            <person name="Watanabe K."/>
            <person name="Kumagai A."/>
            <person name="Itakura S."/>
            <person name="Fukuzumi Y."/>
            <person name="Fujimori Y."/>
            <person name="Komiyama M."/>
            <person name="Tashiro H."/>
            <person name="Tanigami A."/>
            <person name="Fujiwara T."/>
            <person name="Ono T."/>
            <person name="Yamada K."/>
            <person name="Fujii Y."/>
            <person name="Ozaki K."/>
            <person name="Hirao M."/>
            <person name="Ohmori Y."/>
            <person name="Kawabata A."/>
            <person name="Hikiji T."/>
            <person name="Kobatake N."/>
            <person name="Inagaki H."/>
            <person name="Ikema Y."/>
            <person name="Okamoto S."/>
            <person name="Okitani R."/>
            <person name="Kawakami T."/>
            <person name="Noguchi S."/>
            <person name="Itoh T."/>
            <person name="Shigeta K."/>
            <person name="Senba T."/>
            <person name="Matsumura K."/>
            <person name="Nakajima Y."/>
            <person name="Mizuno T."/>
            <person name="Morinaga M."/>
            <person name="Sasaki M."/>
            <person name="Togashi T."/>
            <person name="Oyama M."/>
            <person name="Hata H."/>
            <person name="Watanabe M."/>
            <person name="Komatsu T."/>
            <person name="Mizushima-Sugano J."/>
            <person name="Satoh T."/>
            <person name="Shirai Y."/>
            <person name="Takahashi Y."/>
            <person name="Nakagawa K."/>
            <person name="Okumura K."/>
            <person name="Nagase T."/>
            <person name="Nomura N."/>
            <person name="Kikuchi H."/>
            <person name="Masuho Y."/>
            <person name="Yamashita R."/>
            <person name="Nakai K."/>
            <person name="Yada T."/>
            <person name="Nakamura Y."/>
            <person name="Ohara O."/>
            <person name="Isogai T."/>
            <person name="Sugano S."/>
        </authorList>
    </citation>
    <scope>NUCLEOTIDE SEQUENCE [LARGE SCALE MRNA] (ISOFORM 2)</scope>
    <source>
        <tissue>Small intestine</tissue>
    </source>
</reference>
<reference key="2">
    <citation type="journal article" date="2006" name="Nature">
        <title>Analysis of the DNA sequence and duplication history of human chromosome 15.</title>
        <authorList>
            <person name="Zody M.C."/>
            <person name="Garber M."/>
            <person name="Sharpe T."/>
            <person name="Young S.K."/>
            <person name="Rowen L."/>
            <person name="O'Neill K."/>
            <person name="Whittaker C.A."/>
            <person name="Kamal M."/>
            <person name="Chang J.L."/>
            <person name="Cuomo C.A."/>
            <person name="Dewar K."/>
            <person name="FitzGerald M.G."/>
            <person name="Kodira C.D."/>
            <person name="Madan A."/>
            <person name="Qin S."/>
            <person name="Yang X."/>
            <person name="Abbasi N."/>
            <person name="Abouelleil A."/>
            <person name="Arachchi H.M."/>
            <person name="Baradarani L."/>
            <person name="Birditt B."/>
            <person name="Bloom S."/>
            <person name="Bloom T."/>
            <person name="Borowsky M.L."/>
            <person name="Burke J."/>
            <person name="Butler J."/>
            <person name="Cook A."/>
            <person name="DeArellano K."/>
            <person name="DeCaprio D."/>
            <person name="Dorris L. III"/>
            <person name="Dors M."/>
            <person name="Eichler E.E."/>
            <person name="Engels R."/>
            <person name="Fahey J."/>
            <person name="Fleetwood P."/>
            <person name="Friedman C."/>
            <person name="Gearin G."/>
            <person name="Hall J.L."/>
            <person name="Hensley G."/>
            <person name="Johnson E."/>
            <person name="Jones C."/>
            <person name="Kamat A."/>
            <person name="Kaur A."/>
            <person name="Locke D.P."/>
            <person name="Madan A."/>
            <person name="Munson G."/>
            <person name="Jaffe D.B."/>
            <person name="Lui A."/>
            <person name="Macdonald P."/>
            <person name="Mauceli E."/>
            <person name="Naylor J.W."/>
            <person name="Nesbitt R."/>
            <person name="Nicol R."/>
            <person name="O'Leary S.B."/>
            <person name="Ratcliffe A."/>
            <person name="Rounsley S."/>
            <person name="She X."/>
            <person name="Sneddon K.M.B."/>
            <person name="Stewart S."/>
            <person name="Sougnez C."/>
            <person name="Stone S.M."/>
            <person name="Topham K."/>
            <person name="Vincent D."/>
            <person name="Wang S."/>
            <person name="Zimmer A.R."/>
            <person name="Birren B.W."/>
            <person name="Hood L."/>
            <person name="Lander E.S."/>
            <person name="Nusbaum C."/>
        </authorList>
    </citation>
    <scope>NUCLEOTIDE SEQUENCE [LARGE SCALE GENOMIC DNA]</scope>
</reference>
<reference key="3">
    <citation type="journal article" date="2007" name="BMC Genomics">
        <title>The full-ORF clone resource of the German cDNA consortium.</title>
        <authorList>
            <person name="Bechtel S."/>
            <person name="Rosenfelder H."/>
            <person name="Duda A."/>
            <person name="Schmidt C.P."/>
            <person name="Ernst U."/>
            <person name="Wellenreuther R."/>
            <person name="Mehrle A."/>
            <person name="Schuster C."/>
            <person name="Bahr A."/>
            <person name="Bloecker H."/>
            <person name="Heubner D."/>
            <person name="Hoerlein A."/>
            <person name="Michel G."/>
            <person name="Wedler H."/>
            <person name="Koehrer K."/>
            <person name="Ottenwaelder B."/>
            <person name="Poustka A."/>
            <person name="Wiemann S."/>
            <person name="Schupp I."/>
        </authorList>
    </citation>
    <scope>NUCLEOTIDE SEQUENCE [LARGE SCALE MRNA] OF 201-849 (ISOFORM 3)</scope>
    <scope>VARIANT VAL-740</scope>
    <source>
        <tissue>Fetal kidney</tissue>
    </source>
</reference>
<reference key="4">
    <citation type="journal article" date="2018" name="J. Biol. Chem.">
        <title>Heart failure-induced activation of phospholipase iPLA2gamma generates hydroxyeicosatetraenoic acids opening the mitochondrial permeability transition pore.</title>
        <authorList>
            <person name="Moon S.H."/>
            <person name="Liu X."/>
            <person name="Cedars A.M."/>
            <person name="Yang K."/>
            <person name="Kiebish M.A."/>
            <person name="Joseph S.M."/>
            <person name="Kelley J."/>
            <person name="Jenkins C.M."/>
            <person name="Gross R.W."/>
        </authorList>
    </citation>
    <scope>PROTEIN SEQUENCE OF 1-13; 191-215; 526-543 AND 553-587</scope>
    <scope>IDENTIFICATION BY MASS SPECTROMETRY</scope>
    <scope>FUNCTION</scope>
    <scope>CATALYTIC ACTIVITY</scope>
    <scope>SUBCELLULAR LOCATION</scope>
    <scope>TISSUE SPECIFICITY</scope>
    <source>
        <tissue>Myocardium</tissue>
    </source>
</reference>
<organism>
    <name type="scientific">Homo sapiens</name>
    <name type="common">Human</name>
    <dbReference type="NCBI Taxonomy" id="9606"/>
    <lineage>
        <taxon>Eukaryota</taxon>
        <taxon>Metazoa</taxon>
        <taxon>Chordata</taxon>
        <taxon>Craniata</taxon>
        <taxon>Vertebrata</taxon>
        <taxon>Euteleostomi</taxon>
        <taxon>Mammalia</taxon>
        <taxon>Eutheria</taxon>
        <taxon>Euarchontoglires</taxon>
        <taxon>Primates</taxon>
        <taxon>Haplorrhini</taxon>
        <taxon>Catarrhini</taxon>
        <taxon>Hominidae</taxon>
        <taxon>Homo</taxon>
    </lineage>
</organism>
<feature type="chain" id="PRO_0000247027" description="Cytosolic phospholipase A2 zeta">
    <location>
        <begin position="1"/>
        <end position="849"/>
    </location>
</feature>
<feature type="domain" description="C2" evidence="3">
    <location>
        <begin position="27"/>
        <end position="145"/>
    </location>
</feature>
<feature type="domain" description="PLA2c" evidence="4">
    <location>
        <begin position="306"/>
        <end position="849"/>
    </location>
</feature>
<feature type="active site" description="Nucleophile" evidence="1">
    <location>
        <position position="395"/>
    </location>
</feature>
<feature type="active site" description="Proton acceptor" evidence="1">
    <location>
        <position position="680"/>
    </location>
</feature>
<feature type="binding site" evidence="3">
    <location>
        <position position="60"/>
    </location>
    <ligand>
        <name>Ca(2+)</name>
        <dbReference type="ChEBI" id="CHEBI:29108"/>
        <label>1</label>
    </ligand>
</feature>
<feature type="binding site" evidence="3">
    <location>
        <position position="60"/>
    </location>
    <ligand>
        <name>Ca(2+)</name>
        <dbReference type="ChEBI" id="CHEBI:29108"/>
        <label>2</label>
    </ligand>
</feature>
<feature type="binding site" evidence="3">
    <location>
        <position position="66"/>
    </location>
    <ligand>
        <name>Ca(2+)</name>
        <dbReference type="ChEBI" id="CHEBI:29108"/>
        <label>1</label>
    </ligand>
</feature>
<feature type="binding site" evidence="3">
    <location>
        <position position="116"/>
    </location>
    <ligand>
        <name>Ca(2+)</name>
        <dbReference type="ChEBI" id="CHEBI:29108"/>
        <label>1</label>
    </ligand>
</feature>
<feature type="binding site" evidence="3">
    <location>
        <position position="116"/>
    </location>
    <ligand>
        <name>Ca(2+)</name>
        <dbReference type="ChEBI" id="CHEBI:29108"/>
        <label>2</label>
    </ligand>
</feature>
<feature type="binding site" evidence="3">
    <location>
        <position position="118"/>
    </location>
    <ligand>
        <name>Ca(2+)</name>
        <dbReference type="ChEBI" id="CHEBI:29108"/>
        <label>1</label>
    </ligand>
</feature>
<feature type="binding site" evidence="3">
    <location>
        <position position="118"/>
    </location>
    <ligand>
        <name>Ca(2+)</name>
        <dbReference type="ChEBI" id="CHEBI:29108"/>
        <label>2</label>
    </ligand>
</feature>
<feature type="binding site" evidence="3">
    <location>
        <position position="123"/>
    </location>
    <ligand>
        <name>Ca(2+)</name>
        <dbReference type="ChEBI" id="CHEBI:29108"/>
        <label>2</label>
    </ligand>
</feature>
<feature type="splice variant" id="VSP_019887" description="In isoform 3." evidence="8">
    <original>G</original>
    <variation>GQV</variation>
    <location>
        <position position="352"/>
    </location>
</feature>
<feature type="splice variant" id="VSP_019888" description="In isoform 2." evidence="7">
    <original>ALSTERLQYYTQELGVRERSGH</original>
    <variation>DVRVSPCQLPRLHSSNLDHSLW</variation>
    <location>
        <begin position="433"/>
        <end position="454"/>
    </location>
</feature>
<feature type="splice variant" id="VSP_019889" description="In isoform 2." evidence="7">
    <location>
        <begin position="455"/>
        <end position="849"/>
    </location>
</feature>
<feature type="sequence variant" id="VAR_053553" description="In dbSNP:rs636604.">
    <original>G</original>
    <variation>V</variation>
    <location>
        <position position="30"/>
    </location>
</feature>
<feature type="sequence variant" id="VAR_027054" description="In dbSNP:rs1356410." evidence="5">
    <original>M</original>
    <variation>V</variation>
    <location>
        <position position="740"/>
    </location>
</feature>
<feature type="sequence conflict" description="In Ref. 1; BAD18801." evidence="9" ref="1">
    <original>R</original>
    <variation>G</variation>
    <location>
        <position position="203"/>
    </location>
</feature>
<feature type="sequence conflict" description="In Ref. 1; BAD18801." evidence="9" ref="1">
    <original>A</original>
    <variation>T</variation>
    <location>
        <position position="262"/>
    </location>
</feature>
<feature type="sequence conflict" description="In Ref. 3; CAH18288." evidence="9" ref="3">
    <original>G</original>
    <variation>E</variation>
    <location>
        <position position="363"/>
    </location>
</feature>